<sequence>MGPASGSQLLVLLLLLASSPLALGIPMYSIITPNVLRLESEETIVLEAHDAQGDIPVTVTVQDFLKRQVLTSEKTVLTGASGHLRSVSIKIPASKEFNSDKEGHKYVTVVANFGETVVEKAVMVSFQSGYLFIQTDKTIYTPGSTVLYRIFTVDNNLLPVGKTVVILIETPDGIPVKRDILSSNNQHGILPLSWNIPELVNMGQWKIRAFYEHAPKQIFSAEFEVKEYVLPSFEVRVEPTETFYYIDDPNGLEVSIIAKFLYGKNVDGTAFVIFGVQDGDKKISLAHSLTRVVIEDGVGDAVLTRKVLMEGVRPSNADALVGKSLYVSVTVILHSGSDMVEAERSGIPIVTSPYQIHFTKTPKFFKPAMPFDLMVFVTNPDGSPASKVLVVTQGSNAKALTQDDGVAKLSINTPNSRQPLTITVRTKKDTLPESRQATKTMEAHPYSTMHNSNNYLHLSVSRMELKPGDNLNVNFHLRTDPGHEAKIRYYTYLVMNKGKLLKAGRQVREPGQDLVVLSLPITPEFIPSFRLVAYYTLIGASGQREVVADSVWVDVKDSCIGTLVVKGDPRDNHLAPGQQTTLRIEGNQGARVGLVAVDKGVFVLNKKNKLTQSKIWDVVEKADIGCTPGSGKNYAGVFMDAGLAFKTSQGLQTEQRADLECTKPAARRRRSVQLMERRMDKAGQYTDKGLRKCCEDGMRDIPMRYSCQRRARLITQGENCIKAFIDCCNHITKLREQHRRDHVLGLARSELEEDIIPEEDIISRSHFPQSWLWTIEELKEPEKNGISTKVMNIFLKDSITTWEILAVSLSDKKGICVADPYEIRVMQDFFIDLRLPYSVVRNEQVEIRAVLFNYREQEELKVRVELLHNPAFCSMATAKNRYFQTIKIPPKSSVAVPYVIVPLKIGQQEVEVKAAVFNHFISDGVKKTLKVVPEGMRINKTVAIHTLDPEKLGQGGVQKVDVPAADLSDQVPDTDSETRIILQGSPVVQMAEDAVDGERLKHLIVTPAGCGEQNMIGMTPTVIAVHYLDQTEQWEKFGIEKRQEALELIKKGYTQQLAFKQPSSAYAAFNNRPPSTWLTAYVVKVFSLAANLIAIDSHVLCGAVKWLILEKQKPDGVFQEDGPVIHQEMIGGFRNAKEADVSLTAFVLIALQEARDICEGQVNSLPGSINKAGEYIEASYMNLQRPYTVAIAGYALALMNKLEEPYLGKFLNTAKDRNRWEEPDQQLYNVEATSYALLALLLLKDFDSVPPVVRWLNEQRYYGGGYGSTQATFMVFQALAQYQTDVPDHKDLNMDVSFHLPSRSSATTFRLLWENGNLLRSEETKQNEAFSLTAKGKGRGTLSVVAVYHAKLKSKVTCKKFDLRVSIRPAPETAKKPEEAKNTMFLEICTKYLGDVDATMSILDISMMTGFAPDTKDLELLASGVDRYISKYEMNKAFSNKNTLIIYLEKISHTEEDCLTFKVHQYFNVGLIQPGSVKVYSYYNLEESCTRFYHPEKDDGMLSKLCHSEMCRCAEENCFMQQSQEKINLNVRLDKACEPGVDYVYKTELTNIELLDDFDEYTMTIQQVIKSGSDEVQAGQQRKFISHIKCRNALKLQKGKKYLMWGLSSDLWGEKPNTSYIIGKDTWVEHWPEAEECQDQKYQKQCEELGAFTESMVVYGCPN</sequence>
<accession>P01027</accession>
<accession>Q61370</accession>
<accession>Q80XP1</accession>
<dbReference type="EMBL" id="K02782">
    <property type="protein sequence ID" value="AAC42013.1"/>
    <property type="molecule type" value="mRNA"/>
</dbReference>
<dbReference type="EMBL" id="BC043338">
    <property type="protein sequence ID" value="AAH43338.1"/>
    <property type="molecule type" value="mRNA"/>
</dbReference>
<dbReference type="EMBL" id="M35659">
    <property type="protein sequence ID" value="AAA37339.1"/>
    <property type="molecule type" value="mRNA"/>
</dbReference>
<dbReference type="EMBL" id="M33032">
    <property type="protein sequence ID" value="AAA37378.1"/>
    <property type="molecule type" value="mRNA"/>
</dbReference>
<dbReference type="EMBL" id="J00369">
    <property type="protein sequence ID" value="AAA37336.1"/>
    <property type="molecule type" value="Genomic_DNA"/>
</dbReference>
<dbReference type="EMBL" id="J00367">
    <property type="protein sequence ID" value="AAA37336.1"/>
    <property type="status" value="JOINED"/>
    <property type="molecule type" value="Genomic_DNA"/>
</dbReference>
<dbReference type="EMBL" id="Z37998">
    <property type="protein sequence ID" value="CAA86099.2"/>
    <property type="molecule type" value="Genomic_DNA"/>
</dbReference>
<dbReference type="CCDS" id="CCDS37670.1">
    <molecule id="P01027-1"/>
</dbReference>
<dbReference type="PIR" id="A92459">
    <property type="entry name" value="C3MS"/>
</dbReference>
<dbReference type="PIR" id="I48284">
    <property type="entry name" value="I48284"/>
</dbReference>
<dbReference type="RefSeq" id="NP_033908.2">
    <molecule id="P01027-1"/>
    <property type="nucleotide sequence ID" value="NM_009778.3"/>
</dbReference>
<dbReference type="PDB" id="6XZU">
    <property type="method" value="X-ray"/>
    <property type="resolution" value="1.50 A"/>
    <property type="chains" value="B=1517-1663"/>
</dbReference>
<dbReference type="PDBsum" id="6XZU"/>
<dbReference type="SMR" id="P01027"/>
<dbReference type="BioGRID" id="198418">
    <property type="interactions" value="11"/>
</dbReference>
<dbReference type="ComplexPortal" id="CPX-5893">
    <property type="entry name" value="Alternative pathway fluid-phase C3 convertase complex C3(H2O)Bb"/>
</dbReference>
<dbReference type="ComplexPortal" id="CPX-988">
    <property type="entry name" value="Complement C3b complex"/>
</dbReference>
<dbReference type="FunCoup" id="P01027">
    <property type="interactions" value="794"/>
</dbReference>
<dbReference type="IntAct" id="P01027">
    <property type="interactions" value="5"/>
</dbReference>
<dbReference type="MINT" id="P01027"/>
<dbReference type="STRING" id="10090.ENSMUSP00000024988"/>
<dbReference type="MEROPS" id="I39.950"/>
<dbReference type="GlyCosmos" id="P01027">
    <property type="glycosylation" value="2 sites, No reported glycans"/>
</dbReference>
<dbReference type="GlyGen" id="P01027">
    <property type="glycosylation" value="4 sites, 1 N-linked glycan (1 site), 1 O-linked glycan (1 site)"/>
</dbReference>
<dbReference type="iPTMnet" id="P01027"/>
<dbReference type="MetOSite" id="P01027"/>
<dbReference type="PhosphoSitePlus" id="P01027"/>
<dbReference type="SwissPalm" id="P01027"/>
<dbReference type="CPTAC" id="non-CPTAC-5595"/>
<dbReference type="CPTAC" id="non-CPTAC-5596"/>
<dbReference type="jPOST" id="P01027"/>
<dbReference type="PaxDb" id="10090-ENSMUSP00000024988"/>
<dbReference type="PeptideAtlas" id="P01027"/>
<dbReference type="ProteomicsDB" id="283596">
    <molecule id="P01027-1"/>
</dbReference>
<dbReference type="ProteomicsDB" id="283597">
    <molecule id="P01027-2"/>
</dbReference>
<dbReference type="Pumba" id="P01027"/>
<dbReference type="ABCD" id="P01027">
    <property type="antibodies" value="3 sequenced antibodies"/>
</dbReference>
<dbReference type="Antibodypedia" id="692">
    <property type="antibodies" value="2017 antibodies from 49 providers"/>
</dbReference>
<dbReference type="DNASU" id="12266"/>
<dbReference type="Ensembl" id="ENSMUST00000024988.15">
    <molecule id="P01027-1"/>
    <property type="protein sequence ID" value="ENSMUSP00000024988.9"/>
    <property type="gene ID" value="ENSMUSG00000024164.16"/>
</dbReference>
<dbReference type="GeneID" id="12266"/>
<dbReference type="KEGG" id="mmu:12266"/>
<dbReference type="UCSC" id="uc008deg.2">
    <molecule id="P01027-1"/>
    <property type="organism name" value="mouse"/>
</dbReference>
<dbReference type="AGR" id="MGI:88227"/>
<dbReference type="CTD" id="718"/>
<dbReference type="MGI" id="MGI:88227">
    <property type="gene designation" value="C3"/>
</dbReference>
<dbReference type="VEuPathDB" id="HostDB:ENSMUSG00000024164"/>
<dbReference type="eggNOG" id="KOG1366">
    <property type="taxonomic scope" value="Eukaryota"/>
</dbReference>
<dbReference type="GeneTree" id="ENSGT00940000154063"/>
<dbReference type="HOGENOM" id="CLU_001634_4_0_1"/>
<dbReference type="InParanoid" id="P01027"/>
<dbReference type="OMA" id="YNYRQNE"/>
<dbReference type="OrthoDB" id="6359008at2759"/>
<dbReference type="PhylomeDB" id="P01027"/>
<dbReference type="TreeFam" id="TF313285"/>
<dbReference type="Reactome" id="R-MMU-173736">
    <property type="pathway name" value="Alternative complement activation"/>
</dbReference>
<dbReference type="Reactome" id="R-MMU-174577">
    <property type="pathway name" value="Activation of C3 and C5"/>
</dbReference>
<dbReference type="Reactome" id="R-MMU-198933">
    <property type="pathway name" value="Immunoregulatory interactions between a Lymphoid and a non-Lymphoid cell"/>
</dbReference>
<dbReference type="Reactome" id="R-MMU-375276">
    <property type="pathway name" value="Peptide ligand-binding receptors"/>
</dbReference>
<dbReference type="Reactome" id="R-MMU-381426">
    <property type="pathway name" value="Regulation of Insulin-like Growth Factor (IGF) transport and uptake by Insulin-like Growth Factor Binding Proteins (IGFBPs)"/>
</dbReference>
<dbReference type="Reactome" id="R-MMU-418594">
    <property type="pathway name" value="G alpha (i) signalling events"/>
</dbReference>
<dbReference type="Reactome" id="R-MMU-6798695">
    <property type="pathway name" value="Neutrophil degranulation"/>
</dbReference>
<dbReference type="Reactome" id="R-MMU-8957275">
    <property type="pathway name" value="Post-translational protein phosphorylation"/>
</dbReference>
<dbReference type="Reactome" id="R-MMU-977606">
    <property type="pathway name" value="Regulation of Complement cascade"/>
</dbReference>
<dbReference type="BioGRID-ORCS" id="12266">
    <property type="hits" value="3 hits in 64 CRISPR screens"/>
</dbReference>
<dbReference type="ChiTaRS" id="C3">
    <property type="organism name" value="mouse"/>
</dbReference>
<dbReference type="PRO" id="PR:P01027"/>
<dbReference type="Proteomes" id="UP000000589">
    <property type="component" value="Chromosome 17"/>
</dbReference>
<dbReference type="RNAct" id="P01027">
    <property type="molecule type" value="protein"/>
</dbReference>
<dbReference type="Bgee" id="ENSMUSG00000024164">
    <property type="expression patterns" value="Expressed in left lobe of liver and 167 other cell types or tissues"/>
</dbReference>
<dbReference type="ExpressionAtlas" id="P01027">
    <property type="expression patterns" value="baseline and differential"/>
</dbReference>
<dbReference type="GO" id="GO:0009986">
    <property type="term" value="C:cell surface"/>
    <property type="evidence" value="ECO:0000314"/>
    <property type="project" value="MGI"/>
</dbReference>
<dbReference type="GO" id="GO:0005576">
    <property type="term" value="C:extracellular region"/>
    <property type="evidence" value="ECO:0000314"/>
    <property type="project" value="MGI"/>
</dbReference>
<dbReference type="GO" id="GO:0005615">
    <property type="term" value="C:extracellular space"/>
    <property type="evidence" value="ECO:0000314"/>
    <property type="project" value="MGI"/>
</dbReference>
<dbReference type="GO" id="GO:0032991">
    <property type="term" value="C:protein-containing complex"/>
    <property type="evidence" value="ECO:0000314"/>
    <property type="project" value="UniProtKB"/>
</dbReference>
<dbReference type="GO" id="GO:0031715">
    <property type="term" value="F:C5L2 anaphylatoxin chemotactic receptor binding"/>
    <property type="evidence" value="ECO:0000250"/>
    <property type="project" value="UniProtKB"/>
</dbReference>
<dbReference type="GO" id="GO:0004866">
    <property type="term" value="F:endopeptidase inhibitor activity"/>
    <property type="evidence" value="ECO:0007669"/>
    <property type="project" value="InterPro"/>
</dbReference>
<dbReference type="GO" id="GO:0048018">
    <property type="term" value="F:receptor ligand activity"/>
    <property type="evidence" value="ECO:0007669"/>
    <property type="project" value="Ensembl"/>
</dbReference>
<dbReference type="GO" id="GO:0097242">
    <property type="term" value="P:amyloid-beta clearance"/>
    <property type="evidence" value="ECO:0000315"/>
    <property type="project" value="ARUK-UCL"/>
</dbReference>
<dbReference type="GO" id="GO:0042113">
    <property type="term" value="P:B cell activation"/>
    <property type="evidence" value="ECO:0007669"/>
    <property type="project" value="Ensembl"/>
</dbReference>
<dbReference type="GO" id="GO:0006956">
    <property type="term" value="P:complement activation"/>
    <property type="evidence" value="ECO:0000314"/>
    <property type="project" value="MGI"/>
</dbReference>
<dbReference type="GO" id="GO:0006957">
    <property type="term" value="P:complement activation, alternative pathway"/>
    <property type="evidence" value="ECO:0007669"/>
    <property type="project" value="UniProtKB-KW"/>
</dbReference>
<dbReference type="GO" id="GO:0006958">
    <property type="term" value="P:complement activation, classical pathway"/>
    <property type="evidence" value="ECO:0007669"/>
    <property type="project" value="UniProtKB-KW"/>
</dbReference>
<dbReference type="GO" id="GO:0002430">
    <property type="term" value="P:complement receptor mediated signaling pathway"/>
    <property type="evidence" value="ECO:0000315"/>
    <property type="project" value="ARUK-UCL"/>
</dbReference>
<dbReference type="GO" id="GO:0097278">
    <property type="term" value="P:complement-dependent cytotoxicity"/>
    <property type="evidence" value="ECO:0000315"/>
    <property type="project" value="MGI"/>
</dbReference>
<dbReference type="GO" id="GO:0150062">
    <property type="term" value="P:complement-mediated synapse pruning"/>
    <property type="evidence" value="ECO:0000315"/>
    <property type="project" value="ARUK-UCL"/>
</dbReference>
<dbReference type="GO" id="GO:0006631">
    <property type="term" value="P:fatty acid metabolic process"/>
    <property type="evidence" value="ECO:0007669"/>
    <property type="project" value="UniProtKB-KW"/>
</dbReference>
<dbReference type="GO" id="GO:0006954">
    <property type="term" value="P:inflammatory response"/>
    <property type="evidence" value="ECO:0007669"/>
    <property type="project" value="UniProtKB-KW"/>
</dbReference>
<dbReference type="GO" id="GO:0016322">
    <property type="term" value="P:neuron remodeling"/>
    <property type="evidence" value="ECO:0000315"/>
    <property type="project" value="ARUK-UCL"/>
</dbReference>
<dbReference type="GO" id="GO:0035846">
    <property type="term" value="P:oviduct epithelium development"/>
    <property type="evidence" value="ECO:0000316"/>
    <property type="project" value="MGI"/>
</dbReference>
<dbReference type="GO" id="GO:0001970">
    <property type="term" value="P:positive regulation of activation of membrane attack complex"/>
    <property type="evidence" value="ECO:0000315"/>
    <property type="project" value="BHF-UCL"/>
</dbReference>
<dbReference type="GO" id="GO:0045766">
    <property type="term" value="P:positive regulation of angiogenesis"/>
    <property type="evidence" value="ECO:0000315"/>
    <property type="project" value="BHF-UCL"/>
</dbReference>
<dbReference type="GO" id="GO:2000427">
    <property type="term" value="P:positive regulation of apoptotic cell clearance"/>
    <property type="evidence" value="ECO:0007669"/>
    <property type="project" value="Ensembl"/>
</dbReference>
<dbReference type="GO" id="GO:0010828">
    <property type="term" value="P:positive regulation of D-glucose transmembrane transport"/>
    <property type="evidence" value="ECO:0000250"/>
    <property type="project" value="UniProtKB"/>
</dbReference>
<dbReference type="GO" id="GO:0045745">
    <property type="term" value="P:positive regulation of G protein-coupled receptor signaling pathway"/>
    <property type="evidence" value="ECO:0000250"/>
    <property type="project" value="UniProtKB"/>
</dbReference>
<dbReference type="GO" id="GO:0010884">
    <property type="term" value="P:positive regulation of lipid storage"/>
    <property type="evidence" value="ECO:0000250"/>
    <property type="project" value="UniProtKB"/>
</dbReference>
<dbReference type="GO" id="GO:0050766">
    <property type="term" value="P:positive regulation of phagocytosis"/>
    <property type="evidence" value="ECO:0000315"/>
    <property type="project" value="MGI"/>
</dbReference>
<dbReference type="GO" id="GO:0060100">
    <property type="term" value="P:positive regulation of phagocytosis, engulfment"/>
    <property type="evidence" value="ECO:0000315"/>
    <property type="project" value="ARUK-UCL"/>
</dbReference>
<dbReference type="GO" id="GO:0001934">
    <property type="term" value="P:positive regulation of protein phosphorylation"/>
    <property type="evidence" value="ECO:0000250"/>
    <property type="project" value="UniProtKB"/>
</dbReference>
<dbReference type="GO" id="GO:0048260">
    <property type="term" value="P:positive regulation of receptor-mediated endocytosis"/>
    <property type="evidence" value="ECO:0000315"/>
    <property type="project" value="ARUK-UCL"/>
</dbReference>
<dbReference type="GO" id="GO:0001798">
    <property type="term" value="P:positive regulation of type IIa hypersensitivity"/>
    <property type="evidence" value="ECO:0000315"/>
    <property type="project" value="MGI"/>
</dbReference>
<dbReference type="GO" id="GO:0010575">
    <property type="term" value="P:positive regulation of vascular endothelial growth factor production"/>
    <property type="evidence" value="ECO:0007669"/>
    <property type="project" value="Ensembl"/>
</dbReference>
<dbReference type="GO" id="GO:0010866">
    <property type="term" value="P:regulation of triglyceride biosynthetic process"/>
    <property type="evidence" value="ECO:0000250"/>
    <property type="project" value="UniProtKB"/>
</dbReference>
<dbReference type="GO" id="GO:0009617">
    <property type="term" value="P:response to bacterium"/>
    <property type="evidence" value="ECO:0000270"/>
    <property type="project" value="MGI"/>
</dbReference>
<dbReference type="GO" id="GO:0150064">
    <property type="term" value="P:vertebrate eye-specific patterning"/>
    <property type="evidence" value="ECO:0000315"/>
    <property type="project" value="ARUK-UCL"/>
</dbReference>
<dbReference type="CDD" id="cd00017">
    <property type="entry name" value="ANATO"/>
    <property type="match status" value="1"/>
</dbReference>
<dbReference type="CDD" id="cd02896">
    <property type="entry name" value="complement_C3_C4_C5"/>
    <property type="match status" value="1"/>
</dbReference>
<dbReference type="CDD" id="cd03583">
    <property type="entry name" value="NTR_complement_C3"/>
    <property type="match status" value="1"/>
</dbReference>
<dbReference type="FunFam" id="1.20.91.20:FF:000001">
    <property type="entry name" value="Complement C3"/>
    <property type="match status" value="1"/>
</dbReference>
<dbReference type="FunFam" id="1.50.10.20:FF:000008">
    <property type="entry name" value="Complement C3"/>
    <property type="match status" value="1"/>
</dbReference>
<dbReference type="FunFam" id="2.20.130.20:FF:000001">
    <property type="entry name" value="Complement C3"/>
    <property type="match status" value="1"/>
</dbReference>
<dbReference type="FunFam" id="2.40.50.120:FF:000013">
    <property type="entry name" value="Complement C3"/>
    <property type="match status" value="1"/>
</dbReference>
<dbReference type="FunFam" id="2.60.40.10:FF:001013">
    <property type="entry name" value="Complement C3"/>
    <property type="match status" value="1"/>
</dbReference>
<dbReference type="FunFam" id="2.60.40.1930:FF:000006">
    <property type="entry name" value="Complement C3"/>
    <property type="match status" value="1"/>
</dbReference>
<dbReference type="FunFam" id="2.60.40.1930:FF:000008">
    <property type="entry name" value="Complement C3"/>
    <property type="match status" value="1"/>
</dbReference>
<dbReference type="FunFam" id="2.60.40.690:FF:000004">
    <property type="entry name" value="Complement C3"/>
    <property type="match status" value="1"/>
</dbReference>
<dbReference type="FunFam" id="6.20.50.160:FF:000003">
    <property type="entry name" value="Complement C3"/>
    <property type="match status" value="1"/>
</dbReference>
<dbReference type="FunFam" id="2.60.40.10:FF:000155">
    <property type="entry name" value="complement C3 isoform X1"/>
    <property type="match status" value="1"/>
</dbReference>
<dbReference type="FunFam" id="2.60.40.1940:FF:000001">
    <property type="entry name" value="Complement component C3"/>
    <property type="match status" value="1"/>
</dbReference>
<dbReference type="Gene3D" id="1.50.10.20">
    <property type="match status" value="1"/>
</dbReference>
<dbReference type="Gene3D" id="2.20.130.20">
    <property type="match status" value="1"/>
</dbReference>
<dbReference type="Gene3D" id="2.40.50.120">
    <property type="match status" value="1"/>
</dbReference>
<dbReference type="Gene3D" id="2.60.120.1540">
    <property type="match status" value="1"/>
</dbReference>
<dbReference type="Gene3D" id="2.60.40.1930">
    <property type="match status" value="3"/>
</dbReference>
<dbReference type="Gene3D" id="2.60.40.1940">
    <property type="match status" value="1"/>
</dbReference>
<dbReference type="Gene3D" id="6.20.50.160">
    <property type="match status" value="1"/>
</dbReference>
<dbReference type="Gene3D" id="2.60.40.690">
    <property type="entry name" value="Alpha-macroglobulin, receptor-binding domain"/>
    <property type="match status" value="1"/>
</dbReference>
<dbReference type="Gene3D" id="1.20.91.20">
    <property type="entry name" value="Anaphylotoxins (complement system)"/>
    <property type="match status" value="1"/>
</dbReference>
<dbReference type="Gene3D" id="2.60.40.10">
    <property type="entry name" value="Immunoglobulins"/>
    <property type="match status" value="2"/>
</dbReference>
<dbReference type="InterPro" id="IPR009048">
    <property type="entry name" value="A-macroglobulin_rcpt-bd"/>
</dbReference>
<dbReference type="InterPro" id="IPR036595">
    <property type="entry name" value="A-macroglobulin_rcpt-bd_sf"/>
</dbReference>
<dbReference type="InterPro" id="IPR050473">
    <property type="entry name" value="A2M/Complement_sys"/>
</dbReference>
<dbReference type="InterPro" id="IPR011625">
    <property type="entry name" value="A2M_N_BRD"/>
</dbReference>
<dbReference type="InterPro" id="IPR047565">
    <property type="entry name" value="Alpha-macroglob_thiol-ester_cl"/>
</dbReference>
<dbReference type="InterPro" id="IPR011626">
    <property type="entry name" value="Alpha-macroglobulin_TED"/>
</dbReference>
<dbReference type="InterPro" id="IPR000020">
    <property type="entry name" value="Anaphylatoxin/fibulin"/>
</dbReference>
<dbReference type="InterPro" id="IPR018081">
    <property type="entry name" value="Anaphylatoxin_comp_syst"/>
</dbReference>
<dbReference type="InterPro" id="IPR001840">
    <property type="entry name" value="Anaphylatoxn_comp_syst_dom"/>
</dbReference>
<dbReference type="InterPro" id="IPR041425">
    <property type="entry name" value="C3/4/5_MG1"/>
</dbReference>
<dbReference type="InterPro" id="IPR049466">
    <property type="entry name" value="C3_CUB1"/>
</dbReference>
<dbReference type="InterPro" id="IPR048848">
    <property type="entry name" value="C3_CUB2"/>
</dbReference>
<dbReference type="InterPro" id="IPR013783">
    <property type="entry name" value="Ig-like_fold"/>
</dbReference>
<dbReference type="InterPro" id="IPR001599">
    <property type="entry name" value="Macroglobln_a2"/>
</dbReference>
<dbReference type="InterPro" id="IPR019742">
    <property type="entry name" value="MacrogloblnA2_CS"/>
</dbReference>
<dbReference type="InterPro" id="IPR002890">
    <property type="entry name" value="MG2"/>
</dbReference>
<dbReference type="InterPro" id="IPR041555">
    <property type="entry name" value="MG3"/>
</dbReference>
<dbReference type="InterPro" id="IPR040839">
    <property type="entry name" value="MG4"/>
</dbReference>
<dbReference type="InterPro" id="IPR001134">
    <property type="entry name" value="Netrin_domain"/>
</dbReference>
<dbReference type="InterPro" id="IPR018933">
    <property type="entry name" value="Netrin_module_non-TIMP"/>
</dbReference>
<dbReference type="InterPro" id="IPR035815">
    <property type="entry name" value="NTR_complement_C3"/>
</dbReference>
<dbReference type="InterPro" id="IPR008930">
    <property type="entry name" value="Terpenoid_cyclase/PrenylTrfase"/>
</dbReference>
<dbReference type="InterPro" id="IPR008993">
    <property type="entry name" value="TIMP-like_OB-fold"/>
</dbReference>
<dbReference type="PANTHER" id="PTHR11412:SF81">
    <property type="entry name" value="COMPLEMENT C3"/>
    <property type="match status" value="1"/>
</dbReference>
<dbReference type="PANTHER" id="PTHR11412">
    <property type="entry name" value="MACROGLOBULIN / COMPLEMENT"/>
    <property type="match status" value="1"/>
</dbReference>
<dbReference type="Pfam" id="PF00207">
    <property type="entry name" value="A2M"/>
    <property type="match status" value="1"/>
</dbReference>
<dbReference type="Pfam" id="PF07703">
    <property type="entry name" value="A2M_BRD"/>
    <property type="match status" value="1"/>
</dbReference>
<dbReference type="Pfam" id="PF07677">
    <property type="entry name" value="A2M_recep"/>
    <property type="match status" value="1"/>
</dbReference>
<dbReference type="Pfam" id="PF01821">
    <property type="entry name" value="ANATO"/>
    <property type="match status" value="1"/>
</dbReference>
<dbReference type="Pfam" id="PF21406">
    <property type="entry name" value="C3_CUB1"/>
    <property type="match status" value="1"/>
</dbReference>
<dbReference type="Pfam" id="PF21308">
    <property type="entry name" value="C3_CUB2"/>
    <property type="match status" value="1"/>
</dbReference>
<dbReference type="Pfam" id="PF17790">
    <property type="entry name" value="MG1"/>
    <property type="match status" value="1"/>
</dbReference>
<dbReference type="Pfam" id="PF01835">
    <property type="entry name" value="MG2"/>
    <property type="match status" value="1"/>
</dbReference>
<dbReference type="Pfam" id="PF17791">
    <property type="entry name" value="MG3"/>
    <property type="match status" value="1"/>
</dbReference>
<dbReference type="Pfam" id="PF17789">
    <property type="entry name" value="MG4"/>
    <property type="match status" value="1"/>
</dbReference>
<dbReference type="Pfam" id="PF01759">
    <property type="entry name" value="NTR"/>
    <property type="match status" value="1"/>
</dbReference>
<dbReference type="Pfam" id="PF07678">
    <property type="entry name" value="TED_complement"/>
    <property type="match status" value="1"/>
</dbReference>
<dbReference type="PRINTS" id="PR00004">
    <property type="entry name" value="ANAPHYLATOXN"/>
</dbReference>
<dbReference type="SFLD" id="SFLDG01179">
    <property type="entry name" value="Complement_C3/C4_Like"/>
    <property type="match status" value="1"/>
</dbReference>
<dbReference type="SMART" id="SM01360">
    <property type="entry name" value="A2M"/>
    <property type="match status" value="1"/>
</dbReference>
<dbReference type="SMART" id="SM01359">
    <property type="entry name" value="A2M_N_2"/>
    <property type="match status" value="1"/>
</dbReference>
<dbReference type="SMART" id="SM01361">
    <property type="entry name" value="A2M_recep"/>
    <property type="match status" value="1"/>
</dbReference>
<dbReference type="SMART" id="SM00104">
    <property type="entry name" value="ANATO"/>
    <property type="match status" value="1"/>
</dbReference>
<dbReference type="SMART" id="SM00643">
    <property type="entry name" value="C345C"/>
    <property type="match status" value="1"/>
</dbReference>
<dbReference type="SMART" id="SM01419">
    <property type="entry name" value="Thiol-ester_cl"/>
    <property type="match status" value="1"/>
</dbReference>
<dbReference type="SUPFAM" id="SSF49410">
    <property type="entry name" value="Alpha-macroglobulin receptor domain"/>
    <property type="match status" value="1"/>
</dbReference>
<dbReference type="SUPFAM" id="SSF47686">
    <property type="entry name" value="Anaphylotoxins (complement system)"/>
    <property type="match status" value="1"/>
</dbReference>
<dbReference type="SUPFAM" id="SSF48239">
    <property type="entry name" value="Terpenoid cyclases/Protein prenyltransferases"/>
    <property type="match status" value="1"/>
</dbReference>
<dbReference type="SUPFAM" id="SSF50242">
    <property type="entry name" value="TIMP-like"/>
    <property type="match status" value="1"/>
</dbReference>
<dbReference type="PROSITE" id="PS00477">
    <property type="entry name" value="ALPHA_2_MACROGLOBULIN"/>
    <property type="match status" value="1"/>
</dbReference>
<dbReference type="PROSITE" id="PS01177">
    <property type="entry name" value="ANAPHYLATOXIN_1"/>
    <property type="match status" value="1"/>
</dbReference>
<dbReference type="PROSITE" id="PS01178">
    <property type="entry name" value="ANAPHYLATOXIN_2"/>
    <property type="match status" value="1"/>
</dbReference>
<dbReference type="PROSITE" id="PS50189">
    <property type="entry name" value="NTR"/>
    <property type="match status" value="1"/>
</dbReference>
<reference key="1">
    <citation type="journal article" date="1984" name="Philos. Trans. R. Soc. Lond., B, Biol. Sci.">
        <title>Nucleotide sequence of complementary DNA and derived amino acid sequence of murine complement protein C3.</title>
        <authorList>
            <person name="Fey G.H."/>
            <person name="Lundwall A."/>
            <person name="Wetsel R.A."/>
            <person name="Tack B.F."/>
            <person name="de Bruijn M.H.L."/>
            <person name="Domdey H."/>
        </authorList>
    </citation>
    <scope>NUCLEOTIDE SEQUENCE [MRNA] (ISOFORM LONG)</scope>
</reference>
<reference key="2">
    <citation type="journal article" date="2004" name="Genome Res.">
        <title>The status, quality, and expansion of the NIH full-length cDNA project: the Mammalian Gene Collection (MGC).</title>
        <authorList>
            <consortium name="The MGC Project Team"/>
        </authorList>
    </citation>
    <scope>NUCLEOTIDE SEQUENCE [LARGE SCALE MRNA]</scope>
    <source>
        <strain>FVB/N</strain>
        <tissue>Liver</tissue>
    </source>
</reference>
<reference key="3">
    <citation type="journal article" date="1984" name="J. Biol. Chem.">
        <title>Structure of murine complement component C3. I. Nucleotide sequence of cloned complementary and genomic DNA coding for the beta chain.</title>
        <authorList>
            <person name="Lundwall A."/>
            <person name="Wetsel R.A."/>
            <person name="Domdey H."/>
            <person name="Tack B.F."/>
            <person name="Fey G.H."/>
        </authorList>
    </citation>
    <scope>NUCLEOTIDE SEQUENCE [GENOMIC DNA] OF 1-724 (ISOFORM LONG)</scope>
</reference>
<reference key="4">
    <citation type="journal article" date="1982" name="Proc. Natl. Acad. Sci. U.S.A.">
        <title>Isolation and analysis of genomic DNA clones encoding the third component of mouse complement.</title>
        <authorList>
            <person name="Wiebauer K."/>
            <person name="Domdey H."/>
            <person name="Diggelmann H."/>
            <person name="Fey G."/>
        </authorList>
    </citation>
    <scope>NUCLEOTIDE SEQUENCE [GENOMIC DNA] OF 1-34</scope>
</reference>
<reference key="5">
    <citation type="journal article" date="1985" name="Proc. Natl. Acad. Sci. U.S.A.">
        <title>Common evolutionary origin of alpha 2-macroglobulin and complement components C3 and C4.</title>
        <authorList>
            <person name="Sottrup-Jensen L."/>
            <person name="Stepanik T.M."/>
            <person name="Kristensen T."/>
            <person name="Lonblad P.B."/>
            <person name="Jones C.M."/>
            <person name="Wierzbicki D.M."/>
            <person name="Magnusson S."/>
            <person name="Domdey H."/>
            <person name="Wetsel R.A."/>
            <person name="Lundwall A."/>
            <person name="Tack B.F."/>
            <person name="Fey G.H."/>
        </authorList>
    </citation>
    <scope>NUCLEOTIDE SEQUENCE [MRNA] OF 25-1663 (ISOFORM LONG)</scope>
</reference>
<reference key="6">
    <citation type="journal article" date="1983" name="Springer Semin. Immunopathol.">
        <title>Structure and expression of the C3 gene.</title>
        <authorList>
            <person name="Fey G."/>
            <person name="Domdey H."/>
            <person name="Wiebauer K."/>
            <person name="Whitehead A.S."/>
            <person name="Odink K."/>
        </authorList>
    </citation>
    <scope>NUCLEOTIDE SEQUENCE [MRNA] OF 25-240 (ISOFORM LONG)</scope>
</reference>
<reference key="7">
    <citation type="journal article" date="1993" name="Cancer Res.">
        <title>A paracrine migration-stimulating factor for metastatic tumor cells secreted by mouse hepatic sinusoidal endothelial cells: identification as complement component C3b.</title>
        <authorList>
            <person name="Hamada J."/>
            <person name="Cavanaugh P.G."/>
            <person name="Miki K."/>
            <person name="Nicolson G.L."/>
        </authorList>
    </citation>
    <scope>PROTEIN SEQUENCE OF 25-41 AND 749-760</scope>
</reference>
<reference key="8">
    <citation type="journal article" date="1991" name="FEBS Lett.">
        <title>The specific production of the third component of complement by osteoblastic cells treated with 1 alpha,25-dihydroxyvitamin D3.</title>
        <authorList>
            <person name="Sato T."/>
            <person name="Hong M.H."/>
            <person name="Jin C.H."/>
            <person name="Ishimi Y."/>
            <person name="Udagawa N."/>
            <person name="Shinki T."/>
            <person name="Abe E."/>
            <person name="Suda T."/>
        </authorList>
    </citation>
    <scope>PROTEIN SEQUENCE OF 25-31 AND 671-680</scope>
</reference>
<reference key="9">
    <citation type="journal article" date="1983" name="Ann. N. Y. Acad. Sci.">
        <title>Amino acid sequences of mouse complement C3 derived from nucleotide sequences of cloned cDNA.</title>
        <authorList>
            <person name="Fey G.H."/>
            <person name="Wiebauer K."/>
            <person name="Domdey H."/>
        </authorList>
    </citation>
    <scope>NUCLEOTIDE SEQUENCE [MRNA] OF 658-761</scope>
</reference>
<reference key="10">
    <citation type="journal article" date="1984" name="J. Biol. Chem.">
        <title>Structure of murine complement component C3. II. Nucleotide sequence of cloned complementary DNA coding for the alpha chain.</title>
        <authorList>
            <person name="Wetsel R.A."/>
            <person name="Lundwall A."/>
            <person name="Davidson F."/>
            <person name="Gibson T."/>
            <person name="Tack B.F."/>
            <person name="Fey G.H."/>
        </authorList>
    </citation>
    <scope>NUCLEOTIDE SEQUENCE [GENOMIC DNA] OF 671-1663 (ISOFORM LONG)</scope>
</reference>
<reference key="11">
    <citation type="journal article" date="1982" name="Proc. Natl. Acad. Sci. U.S.A.">
        <title>Characterization of the mRNA and cloned cDNA specifying the third component of mouse complement.</title>
        <authorList>
            <person name="Domdey H."/>
            <person name="Wiebauer K."/>
            <person name="Kazmaier M."/>
            <person name="Mueller V."/>
            <person name="Odink K."/>
            <person name="Fey G.H."/>
        </authorList>
    </citation>
    <scope>NUCLEOTIDE SEQUENCE [GENOMIC DNA] OF 671-748</scope>
</reference>
<reference key="12">
    <citation type="journal article" date="1994" name="J. Exp. Med.">
        <title>The structure of an alternate form of complement C3 that displays costimulatory growth factor activity for B lymphocytes.</title>
        <authorList>
            <person name="Cahen-Kramer Y."/>
            <person name="Martensson I.L."/>
            <person name="Melchers F."/>
        </authorList>
    </citation>
    <scope>ALTERNATIVE INITIATION (ISOFORM SHORT)</scope>
</reference>
<reference key="13">
    <citation type="journal article" date="2002" name="J. Biol. Chem.">
        <title>Acylation-stimulating protein (ASP) deficiency induces obesity resistance and increased energy expenditure in ob/ob mice.</title>
        <authorList>
            <person name="Xia Z."/>
            <person name="Sniderman A.D."/>
            <person name="Cianflone K."/>
        </authorList>
    </citation>
    <scope>FUNCTION</scope>
</reference>
<reference key="14">
    <citation type="journal article" date="2008" name="Am. J. Physiol.">
        <title>Acylation-stimulating protein deficiency and altered adipose tissue in alternative complement pathway knockout mice.</title>
        <authorList>
            <person name="Paglialunga S."/>
            <person name="Fisette A."/>
            <person name="Yan Y."/>
            <person name="Deshaies Y."/>
            <person name="Brouillette J.F."/>
            <person name="Pekna M."/>
            <person name="Cianflone K."/>
        </authorList>
    </citation>
    <scope>DISRUPTION PHENOTYPE</scope>
    <scope>FUNCTION</scope>
</reference>
<reference key="15">
    <citation type="journal article" date="2010" name="Cell">
        <title>A tissue-specific atlas of mouse protein phosphorylation and expression.</title>
        <authorList>
            <person name="Huttlin E.L."/>
            <person name="Jedrychowski M.P."/>
            <person name="Elias J.E."/>
            <person name="Goswami T."/>
            <person name="Rad R."/>
            <person name="Beausoleil S.A."/>
            <person name="Villen J."/>
            <person name="Haas W."/>
            <person name="Sowa M.E."/>
            <person name="Gygi S.P."/>
        </authorList>
    </citation>
    <scope>IDENTIFICATION BY MASS SPECTROMETRY [LARGE SCALE ANALYSIS]</scope>
    <source>
        <tissue>Brain</tissue>
        <tissue>Brown adipose tissue</tissue>
        <tissue>Heart</tissue>
        <tissue>Kidney</tissue>
        <tissue>Liver</tissue>
        <tissue>Lung</tissue>
        <tissue>Pancreas</tissue>
        <tissue>Spleen</tissue>
        <tissue>Testis</tissue>
    </source>
</reference>
<reference key="16">
    <citation type="journal article" date="2019" name="Sci. Rep.">
        <title>A complex of novel protease inhibitor, ovostatin homolog, with its cognate proteases in immature mice uterine luminal fluid.</title>
        <authorList>
            <person name="Huang H.L."/>
            <person name="Li S.C."/>
            <person name="Wu J.F."/>
        </authorList>
    </citation>
    <scope>INTERACTION IN A COMPLEX WITH A2ML1; CLCA1 AND ALB</scope>
</reference>
<feature type="signal peptide" evidence="7 8">
    <location>
        <begin position="1"/>
        <end position="24"/>
    </location>
</feature>
<feature type="chain" id="PRO_0000005917" description="Complement C3">
    <location>
        <begin position="25"/>
        <end position="1663"/>
    </location>
</feature>
<feature type="chain" id="PRO_0000005918" description="Complement C3 beta chain">
    <location>
        <begin position="25"/>
        <end position="666"/>
    </location>
</feature>
<feature type="chain" id="PRO_0000430431" description="C3-beta-c" evidence="2">
    <location>
        <begin position="569"/>
        <end position="666"/>
    </location>
</feature>
<feature type="chain" id="PRO_0000005919" description="Complement C3 alpha chain">
    <location>
        <begin position="671"/>
        <end position="1663"/>
    </location>
</feature>
<feature type="chain" id="PRO_0000005920" description="C3a anaphylatoxin">
    <location>
        <begin position="671"/>
        <end position="748"/>
    </location>
</feature>
<feature type="chain" id="PRO_0000419936" description="Acylation stimulating protein">
    <location>
        <begin position="671"/>
        <end position="747"/>
    </location>
</feature>
<feature type="chain" id="PRO_0000005921" description="Complement C3b">
    <location>
        <begin position="749"/>
        <end position="1663"/>
    </location>
</feature>
<feature type="chain" id="PRO_0000005922" description="Complement C3c alpha' chain fragment 1">
    <location>
        <begin position="749"/>
        <end position="954"/>
    </location>
</feature>
<feature type="chain" id="PRO_0000005923" description="Complement C3dg fragment">
    <location>
        <begin position="955"/>
        <end position="1303"/>
    </location>
</feature>
<feature type="chain" id="PRO_0000005924" description="Complement C3g fragment">
    <location>
        <begin position="955"/>
        <end position="1001"/>
    </location>
</feature>
<feature type="chain" id="PRO_0000005925" description="Complement C3d fragment">
    <location>
        <begin position="1002"/>
        <end position="1303"/>
    </location>
</feature>
<feature type="peptide" id="PRO_0000005927" description="Complement C3f fragment">
    <location>
        <begin position="1304"/>
        <end position="1320"/>
    </location>
</feature>
<feature type="chain" id="PRO_0000273949" description="Complement C3c alpha' chain fragment 2">
    <location>
        <begin position="1321"/>
        <end position="1663"/>
    </location>
</feature>
<feature type="domain" description="Anaphylatoxin-like" evidence="4">
    <location>
        <begin position="693"/>
        <end position="728"/>
    </location>
</feature>
<feature type="domain" description="NTR" evidence="5">
    <location>
        <begin position="1518"/>
        <end position="1661"/>
    </location>
</feature>
<feature type="region of interest" description="Interaction with CFP/properdin" evidence="1">
    <location>
        <begin position="1634"/>
        <end position="1659"/>
    </location>
</feature>
<feature type="site" description="Cleavage; by carboxypeptidases" evidence="1">
    <location>
        <begin position="747"/>
        <end position="748"/>
    </location>
</feature>
<feature type="site" description="Cleavage; by C3 convertase" evidence="1">
    <location>
        <begin position="748"/>
        <end position="749"/>
    </location>
</feature>
<feature type="site" description="Cleavage; by factor I" evidence="3">
    <location>
        <begin position="954"/>
        <end position="955"/>
    </location>
</feature>
<feature type="site" description="Cleavage; by factor I" evidence="1">
    <location>
        <begin position="1303"/>
        <end position="1304"/>
    </location>
</feature>
<feature type="site" description="Cleavage; by factor I" evidence="1">
    <location>
        <begin position="1320"/>
        <end position="1321"/>
    </location>
</feature>
<feature type="site" description="Coordinates Mg(2+) for interaction with Complement factor B Bb fragment (CFB)" evidence="1">
    <location>
        <position position="1663"/>
    </location>
</feature>
<feature type="modified residue" description="Phosphoserine" evidence="1">
    <location>
        <position position="40"/>
    </location>
</feature>
<feature type="modified residue" description="Phosphoserine" evidence="1">
    <location>
        <position position="671"/>
    </location>
</feature>
<feature type="modified residue" description="Phosphoserine" evidence="1">
    <location>
        <position position="968"/>
    </location>
</feature>
<feature type="modified residue" description="Phosphoserine" evidence="1">
    <location>
        <position position="1321"/>
    </location>
</feature>
<feature type="modified residue" description="Phosphoserine" evidence="1">
    <location>
        <position position="1573"/>
    </location>
</feature>
<feature type="glycosylation site" description="N-linked (GlcNAc...) asparagine">
    <location>
        <position position="939"/>
    </location>
</feature>
<feature type="glycosylation site" description="N-linked (GlcNAc...) asparagine">
    <location>
        <position position="1617"/>
    </location>
</feature>
<feature type="disulfide bond" description="Interchain (between beta and alpha chains)" evidence="4 5">
    <location>
        <begin position="559"/>
        <end position="816"/>
    </location>
</feature>
<feature type="disulfide bond" evidence="1">
    <location>
        <begin position="626"/>
        <end position="661"/>
    </location>
</feature>
<feature type="disulfide bond" evidence="1">
    <location>
        <begin position="693"/>
        <end position="720"/>
    </location>
</feature>
<feature type="disulfide bond" evidence="1">
    <location>
        <begin position="694"/>
        <end position="727"/>
    </location>
</feature>
<feature type="disulfide bond" evidence="1">
    <location>
        <begin position="707"/>
        <end position="728"/>
    </location>
</feature>
<feature type="disulfide bond" evidence="1">
    <location>
        <begin position="873"/>
        <end position="1513"/>
    </location>
</feature>
<feature type="disulfide bond" evidence="1">
    <location>
        <begin position="1101"/>
        <end position="1158"/>
    </location>
</feature>
<feature type="disulfide bond" evidence="1">
    <location>
        <begin position="1358"/>
        <end position="1489"/>
    </location>
</feature>
<feature type="disulfide bond" evidence="1">
    <location>
        <begin position="1389"/>
        <end position="1458"/>
    </location>
</feature>
<feature type="disulfide bond" evidence="1">
    <location>
        <begin position="1506"/>
        <end position="1511"/>
    </location>
</feature>
<feature type="disulfide bond" evidence="1">
    <location>
        <begin position="1518"/>
        <end position="1590"/>
    </location>
</feature>
<feature type="disulfide bond" evidence="1">
    <location>
        <begin position="1537"/>
        <end position="1661"/>
    </location>
</feature>
<feature type="disulfide bond" evidence="1">
    <location>
        <begin position="1637"/>
        <end position="1646"/>
    </location>
</feature>
<feature type="cross-link" description="Isoglutamyl cysteine thioester (Cys-Gln)" evidence="1">
    <location>
        <begin position="1010"/>
        <end position="1013"/>
    </location>
</feature>
<feature type="splice variant" id="VSP_018708" description="In isoform Short." evidence="10">
    <location>
        <begin position="1"/>
        <end position="1128"/>
    </location>
</feature>
<feature type="sequence conflict" description="In Ref. 6; AAA37339." evidence="10" ref="6">
    <original>K</original>
    <variation>Q</variation>
    <location>
        <position position="137"/>
    </location>
</feature>
<feature type="sequence conflict" description="In Ref. 1; AAC42013." evidence="10" ref="1">
    <original>E</original>
    <variation>Q</variation>
    <location>
        <position position="858"/>
    </location>
</feature>
<feature type="sequence conflict" description="In Ref. 1; AAC42013 and 10; AAA37336." evidence="10" ref="1 10">
    <original>E</original>
    <variation>K</variation>
    <location>
        <position position="1553"/>
    </location>
</feature>
<feature type="helix" evidence="12">
    <location>
        <begin position="1520"/>
        <end position="1523"/>
    </location>
</feature>
<feature type="helix" evidence="12">
    <location>
        <begin position="1529"/>
        <end position="1535"/>
    </location>
</feature>
<feature type="strand" evidence="12">
    <location>
        <begin position="1541"/>
        <end position="1554"/>
    </location>
</feature>
<feature type="strand" evidence="12">
    <location>
        <begin position="1559"/>
        <end position="1570"/>
    </location>
</feature>
<feature type="strand" evidence="12">
    <location>
        <begin position="1581"/>
        <end position="1586"/>
    </location>
</feature>
<feature type="helix" evidence="12">
    <location>
        <begin position="1588"/>
        <end position="1590"/>
    </location>
</feature>
<feature type="helix" evidence="12">
    <location>
        <begin position="1591"/>
        <end position="1594"/>
    </location>
</feature>
<feature type="strand" evidence="12">
    <location>
        <begin position="1601"/>
        <end position="1607"/>
    </location>
</feature>
<feature type="helix" evidence="12">
    <location>
        <begin position="1608"/>
        <end position="1610"/>
    </location>
</feature>
<feature type="strand" evidence="12">
    <location>
        <begin position="1611"/>
        <end position="1613"/>
    </location>
</feature>
<feature type="strand" evidence="12">
    <location>
        <begin position="1619"/>
        <end position="1621"/>
    </location>
</feature>
<feature type="strand" evidence="12">
    <location>
        <begin position="1627"/>
        <end position="1631"/>
    </location>
</feature>
<feature type="helix" evidence="12">
    <location>
        <begin position="1634"/>
        <end position="1637"/>
    </location>
</feature>
<feature type="turn" evidence="12">
    <location>
        <begin position="1640"/>
        <end position="1642"/>
    </location>
</feature>
<feature type="helix" evidence="12">
    <location>
        <begin position="1643"/>
        <end position="1659"/>
    </location>
</feature>
<name>CO3_MOUSE</name>
<organism>
    <name type="scientific">Mus musculus</name>
    <name type="common">Mouse</name>
    <dbReference type="NCBI Taxonomy" id="10090"/>
    <lineage>
        <taxon>Eukaryota</taxon>
        <taxon>Metazoa</taxon>
        <taxon>Chordata</taxon>
        <taxon>Craniata</taxon>
        <taxon>Vertebrata</taxon>
        <taxon>Euteleostomi</taxon>
        <taxon>Mammalia</taxon>
        <taxon>Eutheria</taxon>
        <taxon>Euarchontoglires</taxon>
        <taxon>Glires</taxon>
        <taxon>Rodentia</taxon>
        <taxon>Myomorpha</taxon>
        <taxon>Muroidea</taxon>
        <taxon>Muridae</taxon>
        <taxon>Murinae</taxon>
        <taxon>Mus</taxon>
        <taxon>Mus</taxon>
    </lineage>
</organism>
<comment type="function">
    <text evidence="1">Precursor of non-enzymatic components of the classical, alternative, lectin and GZMK complement pathways, which consist in a cascade of proteins that leads to phagocytosis and breakdown of pathogens and signaling that strengthens the adaptive immune system.</text>
</comment>
<comment type="function">
    <molecule>Complement C3b</molecule>
    <text evidence="1">Non-enzymatic component of C5 convertase. Generated following cleavage by C3 convertase, it covalently attaches to the surface of pathogens, where it acts as an opsonin that marks the surface of antigens for removal. Complement C3b binds covalently via its reactive thioester, to cell surface carbohydrates or immune aggregates. Together with complement C4b, it then recruits the serine protease complement C2b to form the C5 convertase, which cleaves and activate C5, the next component of the complement pathways. In the alternative complement pathway, recruits the serine protease CFB to form the C5 convertase that cleaves and activates C5.</text>
</comment>
<comment type="function">
    <molecule>C3a anaphylatoxin</molecule>
    <text evidence="1">Mediator of local inflammatory process released following cleavage by C3 convertase. Acts by binding to its receptor, C3AR1, activating G protein-coupled receptor signaling, promoting the phosphorylation, ARRB2-mediated internalization and endocytosis of C3AR1. C3a anaphylatoxin stimulates the activation of immune cells such as mast cells and basophilic leukocytes to release inflammation agents, such as cytokines, chemokines and histamine, which promote inflammation development. Also acts as potent chemoattractant for the migration of macrophages and neutrophils to the inflamed tissues, resulting in neutralization of the inflammatory triggers by multiple ways, such as phagocytosis and generation of reactive oxidants.</text>
</comment>
<comment type="function">
    <molecule>Acylation stimulating protein</molecule>
    <text evidence="1">Adipogenic hormone that stimulates triglyceride synthesis and glucose transport in adipocytes, regulating fat storage and playing a role in postprandial triglyceride clearance. Appears to stimulate triglyceride synthesis via activation of the PLC, MAPK and AKT signaling pathways. Acts by binding to its receptor, C5AR2, activating G protein-coupled receptor signaling, promoting the phosphorylation, ARRB2-mediated internalization and endocytosis of C5AR2.</text>
</comment>
<comment type="function">
    <molecule>C3-beta-c</molecule>
    <text evidence="2">Acts as a chemoattractant for neutrophils in chronic inflammation.</text>
</comment>
<comment type="activity regulation">
    <text evidence="1">Complement activation is inhibited by VSIG4.</text>
</comment>
<comment type="subunit">
    <text evidence="1">In absence of complement activation, the C3 precursor is first processed by the removal of 4 Arg residues, forming two chains, beta and alpha, linked by a disulfide bond.</text>
</comment>
<comment type="subunit">
    <molecule>Complement C3b</molecule>
    <text evidence="1">Complement C3b is composed of complement C3b and complement C3 beta chains that are associated via disulfide bonds. Non-enzymatic component of the C5 convertase, also named C4bC2bC3b, composed of the serine protease complement C2b (C2), complement C3b, as well as complement C4b (C4). Non-enzymatic component of the C5 convertase of the alternative complement pathways composed of the serine protease complement CFB and complement C3b. Interacts with CFP; interaction takes place together with CFB in the alternative complement system and allows the complex to become active. Interacts with CR1 (via Sushi 8 and Sushi 9 domains). Interacts with CFH.</text>
</comment>
<comment type="subunit">
    <molecule>Complement C3d fragment</molecule>
    <text evidence="1">Interacts with CFH. Interacts with CR2.</text>
</comment>
<comment type="subunit">
    <molecule>Complement C3dg fragment</molecule>
    <text evidence="1">During pregnancy, C3dg exists as a complex (probably a 2:2:2 heterohexamer) with AGT and the proform of PRG2. Interacts with CR2 (via the N-terminal Sushi domains 1 and 2).</text>
</comment>
<comment type="subcellular location">
    <subcellularLocation>
        <location evidence="1">Secreted</location>
    </subcellularLocation>
</comment>
<comment type="subcellular location">
    <molecule>Complement C3b</molecule>
    <subcellularLocation>
        <location evidence="1">Secreted</location>
    </subcellularLocation>
    <subcellularLocation>
        <location evidence="1">Cell surface</location>
    </subcellularLocation>
    <text evidence="1">Covalently associated with the surface of pathogens: the internal thioester bond reacts with carbohydrate antigens on the target surface to form amide or ester bonds.</text>
</comment>
<comment type="subcellular location">
    <molecule>C3a anaphylatoxin</molecule>
    <subcellularLocation>
        <location evidence="1">Secreted</location>
    </subcellularLocation>
</comment>
<comment type="alternative products">
    <event type="alternative initiation"/>
    <isoform>
        <id>P01027-1</id>
        <name>Long</name>
        <sequence type="displayed"/>
    </isoform>
    <isoform>
        <id>P01027-2</id>
        <name>Short</name>
        <sequence type="described" ref="VSP_018708"/>
    </isoform>
</comment>
<comment type="PTM">
    <text evidence="1">C3 precursor is first processed by the removal of 4 Arg residues, forming two chains, beta and alpha, linked by a disulfide bond. During activation of the complement systems, the alpha chain is cleaved into C3a and C3b by the C3 convertase: C3b stays linked to the beta chain, while C3a is released in the plasma. The alpha chain is cleaved by the serine protease complement C2b component of the C3 convertase to generate C3a and C3b following activation by the classical, lectin and GZMK complement systems. The alpha chain is cleaved by CFB component of the C3 convertase to generate C3a and C3b following activation by the alternative complement system.</text>
</comment>
<comment type="PTM">
    <molecule>C3a anaphylatoxin</molecule>
    <text evidence="1">C3a is further processed by carboxypeptidases to release the C-terminal arginine residue generating the acylation stimulating protein (ASP). Levels of ASP are increased in adipocytes in the postprandial period and by insulin and dietary chylomicrons.</text>
</comment>
<comment type="PTM">
    <molecule>Complement C3b</molecule>
    <text evidence="1">Complement C3b is rapidly split in two positions by factor I (CFI) and a cofactor (CFH) to form iC3b (inactivated C3b) and C3f which is released. CFI and CFH catalyze proteolytic degradation of already-deposited complement C3b. Then iC3b is slowly cleaved (possibly by CFI) to form C3c (beta chain + alpha' chain fragment 1 + alpha' chain fragment 2), C3dg and C3f. Other proteases produce other fragments such as C3d or C3g.</text>
</comment>
<comment type="PTM">
    <molecule>Complement C3b</molecule>
    <text evidence="1">Upon activation, the internal thioester bond reacts with carbohydrate antigens on the target surface to form amide or ester bonds, leading to covalent association with the surface of pathogens.</text>
</comment>
<comment type="PTM">
    <molecule>Complement C3b</molecule>
    <text evidence="1">Complement C3b interacts with complement C4b via a thioester linkage.</text>
</comment>
<comment type="PTM">
    <text evidence="1">Phosphorylated by FAM20C in the extracellular medium.</text>
</comment>
<comment type="disruption phenotype">
    <text evidence="6">Null mice displayed altered lipid metabolism and morphological changes in adipocyte distribution. There is reduced adipsin/CFD expression, increased number of smaller fat cells, decreased DGAT1 expression and activity, and less triglyceride storage capacity associated with delayed postprandial clearance. Mice on a high-fat diet exhibited no diet-induced up-regulation of adipsin/CFD expression nor adipocyte differentiation.</text>
</comment>
<evidence type="ECO:0000250" key="1">
    <source>
        <dbReference type="UniProtKB" id="P01024"/>
    </source>
</evidence>
<evidence type="ECO:0000250" key="2">
    <source>
        <dbReference type="UniProtKB" id="P01026"/>
    </source>
</evidence>
<evidence type="ECO:0000255" key="3"/>
<evidence type="ECO:0000255" key="4">
    <source>
        <dbReference type="PROSITE-ProRule" id="PRU00022"/>
    </source>
</evidence>
<evidence type="ECO:0000255" key="5">
    <source>
        <dbReference type="PROSITE-ProRule" id="PRU00295"/>
    </source>
</evidence>
<evidence type="ECO:0000269" key="6">
    <source>
    </source>
</evidence>
<evidence type="ECO:0000269" key="7">
    <source>
    </source>
</evidence>
<evidence type="ECO:0000269" key="8">
    <source>
    </source>
</evidence>
<evidence type="ECO:0000303" key="9">
    <source>
    </source>
</evidence>
<evidence type="ECO:0000305" key="10"/>
<evidence type="ECO:0000312" key="11">
    <source>
        <dbReference type="MGI" id="MGI:88227"/>
    </source>
</evidence>
<evidence type="ECO:0007829" key="12">
    <source>
        <dbReference type="PDB" id="6XZU"/>
    </source>
</evidence>
<keyword id="KW-0002">3D-structure</keyword>
<keyword id="KW-0024">Alternative initiation</keyword>
<keyword id="KW-0165">Cleavage on pair of basic residues</keyword>
<keyword id="KW-0179">Complement alternate pathway</keyword>
<keyword id="KW-0180">Complement pathway</keyword>
<keyword id="KW-0903">Direct protein sequencing</keyword>
<keyword id="KW-1015">Disulfide bond</keyword>
<keyword id="KW-0276">Fatty acid metabolism</keyword>
<keyword id="KW-0325">Glycoprotein</keyword>
<keyword id="KW-0391">Immunity</keyword>
<keyword id="KW-0395">Inflammatory response</keyword>
<keyword id="KW-0399">Innate immunity</keyword>
<keyword id="KW-0443">Lipid metabolism</keyword>
<keyword id="KW-0597">Phosphoprotein</keyword>
<keyword id="KW-1185">Reference proteome</keyword>
<keyword id="KW-0964">Secreted</keyword>
<keyword id="KW-0732">Signal</keyword>
<keyword id="KW-0882">Thioester bond</keyword>
<gene>
    <name evidence="9 11" type="primary">C3</name>
</gene>
<proteinExistence type="evidence at protein level"/>
<protein>
    <recommendedName>
        <fullName>Complement C3</fullName>
    </recommendedName>
    <alternativeName>
        <fullName>HSE-MSF</fullName>
    </alternativeName>
    <component>
        <recommendedName>
            <fullName>Complement C3 beta chain</fullName>
        </recommendedName>
    </component>
    <component>
        <recommendedName>
            <fullName>C3-beta-c</fullName>
            <shortName>C3bc</shortName>
        </recommendedName>
    </component>
    <component>
        <recommendedName>
            <fullName>Complement C3 alpha chain</fullName>
        </recommendedName>
    </component>
    <component>
        <recommendedName>
            <fullName>C3a anaphylatoxin</fullName>
        </recommendedName>
    </component>
    <component>
        <recommendedName>
            <fullName>Acylation stimulating protein</fullName>
            <shortName>ASP</shortName>
        </recommendedName>
        <alternativeName>
            <fullName>C3adesArg</fullName>
        </alternativeName>
    </component>
    <component>
        <recommendedName>
            <fullName>Complement C3b</fullName>
        </recommendedName>
        <alternativeName>
            <fullName>Complement C3b-alpha' chain</fullName>
        </alternativeName>
    </component>
    <component>
        <recommendedName>
            <fullName>Complement C3c alpha' chain fragment 1</fullName>
        </recommendedName>
    </component>
    <component>
        <recommendedName>
            <fullName>Complement C3dg fragment</fullName>
        </recommendedName>
    </component>
    <component>
        <recommendedName>
            <fullName>Complement C3g fragment</fullName>
        </recommendedName>
    </component>
    <component>
        <recommendedName>
            <fullName>Complement C3d fragment</fullName>
        </recommendedName>
    </component>
    <component>
        <recommendedName>
            <fullName>Complement C3f fragment</fullName>
        </recommendedName>
    </component>
    <component>
        <recommendedName>
            <fullName>Complement C3c alpha' chain fragment 2</fullName>
        </recommendedName>
    </component>
</protein>